<name>PANB_CAMJR</name>
<organism>
    <name type="scientific">Campylobacter jejuni (strain RM1221)</name>
    <dbReference type="NCBI Taxonomy" id="195099"/>
    <lineage>
        <taxon>Bacteria</taxon>
        <taxon>Pseudomonadati</taxon>
        <taxon>Campylobacterota</taxon>
        <taxon>Epsilonproteobacteria</taxon>
        <taxon>Campylobacterales</taxon>
        <taxon>Campylobacteraceae</taxon>
        <taxon>Campylobacter</taxon>
    </lineage>
</organism>
<gene>
    <name evidence="1" type="primary">panB</name>
    <name type="ordered locus">CJE0343</name>
</gene>
<reference key="1">
    <citation type="journal article" date="2005" name="PLoS Biol.">
        <title>Major structural differences and novel potential virulence mechanisms from the genomes of multiple Campylobacter species.</title>
        <authorList>
            <person name="Fouts D.E."/>
            <person name="Mongodin E.F."/>
            <person name="Mandrell R.E."/>
            <person name="Miller W.G."/>
            <person name="Rasko D.A."/>
            <person name="Ravel J."/>
            <person name="Brinkac L.M."/>
            <person name="DeBoy R.T."/>
            <person name="Parker C.T."/>
            <person name="Daugherty S.C."/>
            <person name="Dodson R.J."/>
            <person name="Durkin A.S."/>
            <person name="Madupu R."/>
            <person name="Sullivan S.A."/>
            <person name="Shetty J.U."/>
            <person name="Ayodeji M.A."/>
            <person name="Shvartsbeyn A."/>
            <person name="Schatz M.C."/>
            <person name="Badger J.H."/>
            <person name="Fraser C.M."/>
            <person name="Nelson K.E."/>
        </authorList>
    </citation>
    <scope>NUCLEOTIDE SEQUENCE [LARGE SCALE GENOMIC DNA]</scope>
    <source>
        <strain>RM1221</strain>
    </source>
</reference>
<keyword id="KW-0963">Cytoplasm</keyword>
<keyword id="KW-0460">Magnesium</keyword>
<keyword id="KW-0479">Metal-binding</keyword>
<keyword id="KW-0566">Pantothenate biosynthesis</keyword>
<keyword id="KW-0808">Transferase</keyword>
<accession>Q5HWH3</accession>
<protein>
    <recommendedName>
        <fullName evidence="1">3-methyl-2-oxobutanoate hydroxymethyltransferase</fullName>
        <ecNumber evidence="1">2.1.2.11</ecNumber>
    </recommendedName>
    <alternativeName>
        <fullName evidence="1">Ketopantoate hydroxymethyltransferase</fullName>
        <shortName evidence="1">KPHMT</shortName>
    </alternativeName>
</protein>
<sequence>MRKSILSFLEKKGKNEKITMVSAYDYHSAKILDNCDIDIILVGDSLAMTVLGMQDTLSVTMDEMLIFTKAVSRGAKKSFVLADMPFMSYQSSDRDAILNASRFIKESHANGVKVEGGIEIASKIKLISQSGIPVVAHLGLTPQAVNMLGGYRVQGKDLQSAQKIIDDAKAVQDAGACMLVLECVPVKLAQKISSILEIPTIGIGSGKYCDGQVLVYHDLLGLNKDFKAKFVKHFDKIDPQVGVEKYRDEVKSGIFPSEEHSFDYLDDELLDKLY</sequence>
<feature type="chain" id="PRO_0000184833" description="3-methyl-2-oxobutanoate hydroxymethyltransferase">
    <location>
        <begin position="1"/>
        <end position="274"/>
    </location>
</feature>
<feature type="active site" description="Proton acceptor" evidence="1">
    <location>
        <position position="182"/>
    </location>
</feature>
<feature type="binding site" evidence="1">
    <location>
        <begin position="44"/>
        <end position="45"/>
    </location>
    <ligand>
        <name>3-methyl-2-oxobutanoate</name>
        <dbReference type="ChEBI" id="CHEBI:11851"/>
    </ligand>
</feature>
<feature type="binding site" evidence="1">
    <location>
        <position position="44"/>
    </location>
    <ligand>
        <name>Mg(2+)</name>
        <dbReference type="ChEBI" id="CHEBI:18420"/>
    </ligand>
</feature>
<feature type="binding site" evidence="1">
    <location>
        <position position="83"/>
    </location>
    <ligand>
        <name>3-methyl-2-oxobutanoate</name>
        <dbReference type="ChEBI" id="CHEBI:11851"/>
    </ligand>
</feature>
<feature type="binding site" evidence="1">
    <location>
        <position position="83"/>
    </location>
    <ligand>
        <name>Mg(2+)</name>
        <dbReference type="ChEBI" id="CHEBI:18420"/>
    </ligand>
</feature>
<feature type="binding site" evidence="1">
    <location>
        <position position="113"/>
    </location>
    <ligand>
        <name>3-methyl-2-oxobutanoate</name>
        <dbReference type="ChEBI" id="CHEBI:11851"/>
    </ligand>
</feature>
<feature type="binding site" evidence="1">
    <location>
        <position position="115"/>
    </location>
    <ligand>
        <name>Mg(2+)</name>
        <dbReference type="ChEBI" id="CHEBI:18420"/>
    </ligand>
</feature>
<dbReference type="EC" id="2.1.2.11" evidence="1"/>
<dbReference type="EMBL" id="CP000025">
    <property type="protein sequence ID" value="AAW34932.1"/>
    <property type="molecule type" value="Genomic_DNA"/>
</dbReference>
<dbReference type="RefSeq" id="WP_002854572.1">
    <property type="nucleotide sequence ID" value="NC_003912.7"/>
</dbReference>
<dbReference type="SMR" id="Q5HWH3"/>
<dbReference type="KEGG" id="cjr:CJE0343"/>
<dbReference type="HOGENOM" id="CLU_036645_1_0_7"/>
<dbReference type="UniPathway" id="UPA00028">
    <property type="reaction ID" value="UER00003"/>
</dbReference>
<dbReference type="GO" id="GO:0005737">
    <property type="term" value="C:cytoplasm"/>
    <property type="evidence" value="ECO:0007669"/>
    <property type="project" value="UniProtKB-SubCell"/>
</dbReference>
<dbReference type="GO" id="GO:0003864">
    <property type="term" value="F:3-methyl-2-oxobutanoate hydroxymethyltransferase activity"/>
    <property type="evidence" value="ECO:0007669"/>
    <property type="project" value="UniProtKB-UniRule"/>
</dbReference>
<dbReference type="GO" id="GO:0000287">
    <property type="term" value="F:magnesium ion binding"/>
    <property type="evidence" value="ECO:0007669"/>
    <property type="project" value="TreeGrafter"/>
</dbReference>
<dbReference type="GO" id="GO:0015940">
    <property type="term" value="P:pantothenate biosynthetic process"/>
    <property type="evidence" value="ECO:0007669"/>
    <property type="project" value="UniProtKB-UniRule"/>
</dbReference>
<dbReference type="CDD" id="cd06557">
    <property type="entry name" value="KPHMT-like"/>
    <property type="match status" value="1"/>
</dbReference>
<dbReference type="FunFam" id="3.20.20.60:FF:000003">
    <property type="entry name" value="3-methyl-2-oxobutanoate hydroxymethyltransferase"/>
    <property type="match status" value="1"/>
</dbReference>
<dbReference type="Gene3D" id="3.20.20.60">
    <property type="entry name" value="Phosphoenolpyruvate-binding domains"/>
    <property type="match status" value="1"/>
</dbReference>
<dbReference type="HAMAP" id="MF_00156">
    <property type="entry name" value="PanB"/>
    <property type="match status" value="1"/>
</dbReference>
<dbReference type="InterPro" id="IPR003700">
    <property type="entry name" value="Pantoate_hydroxy_MeTrfase"/>
</dbReference>
<dbReference type="InterPro" id="IPR015813">
    <property type="entry name" value="Pyrv/PenolPyrv_kinase-like_dom"/>
</dbReference>
<dbReference type="InterPro" id="IPR040442">
    <property type="entry name" value="Pyrv_kinase-like_dom_sf"/>
</dbReference>
<dbReference type="NCBIfam" id="TIGR00222">
    <property type="entry name" value="panB"/>
    <property type="match status" value="1"/>
</dbReference>
<dbReference type="NCBIfam" id="NF001452">
    <property type="entry name" value="PRK00311.1"/>
    <property type="match status" value="1"/>
</dbReference>
<dbReference type="PANTHER" id="PTHR20881">
    <property type="entry name" value="3-METHYL-2-OXOBUTANOATE HYDROXYMETHYLTRANSFERASE"/>
    <property type="match status" value="1"/>
</dbReference>
<dbReference type="PANTHER" id="PTHR20881:SF0">
    <property type="entry name" value="3-METHYL-2-OXOBUTANOATE HYDROXYMETHYLTRANSFERASE"/>
    <property type="match status" value="1"/>
</dbReference>
<dbReference type="Pfam" id="PF02548">
    <property type="entry name" value="Pantoate_transf"/>
    <property type="match status" value="1"/>
</dbReference>
<dbReference type="PIRSF" id="PIRSF000388">
    <property type="entry name" value="Pantoate_hydroxy_MeTrfase"/>
    <property type="match status" value="1"/>
</dbReference>
<dbReference type="SUPFAM" id="SSF51621">
    <property type="entry name" value="Phosphoenolpyruvate/pyruvate domain"/>
    <property type="match status" value="1"/>
</dbReference>
<evidence type="ECO:0000255" key="1">
    <source>
        <dbReference type="HAMAP-Rule" id="MF_00156"/>
    </source>
</evidence>
<comment type="function">
    <text evidence="1">Catalyzes the reversible reaction in which hydroxymethyl group from 5,10-methylenetetrahydrofolate is transferred onto alpha-ketoisovalerate to form ketopantoate.</text>
</comment>
<comment type="catalytic activity">
    <reaction evidence="1">
        <text>3-methyl-2-oxobutanoate + (6R)-5,10-methylene-5,6,7,8-tetrahydrofolate + H2O = 2-dehydropantoate + (6S)-5,6,7,8-tetrahydrofolate</text>
        <dbReference type="Rhea" id="RHEA:11824"/>
        <dbReference type="ChEBI" id="CHEBI:11561"/>
        <dbReference type="ChEBI" id="CHEBI:11851"/>
        <dbReference type="ChEBI" id="CHEBI:15377"/>
        <dbReference type="ChEBI" id="CHEBI:15636"/>
        <dbReference type="ChEBI" id="CHEBI:57453"/>
        <dbReference type="EC" id="2.1.2.11"/>
    </reaction>
</comment>
<comment type="cofactor">
    <cofactor evidence="1">
        <name>Mg(2+)</name>
        <dbReference type="ChEBI" id="CHEBI:18420"/>
    </cofactor>
    <text evidence="1">Binds 1 Mg(2+) ion per subunit.</text>
</comment>
<comment type="pathway">
    <text evidence="1">Cofactor biosynthesis; (R)-pantothenate biosynthesis; (R)-pantoate from 3-methyl-2-oxobutanoate: step 1/2.</text>
</comment>
<comment type="subunit">
    <text evidence="1">Homodecamer; pentamer of dimers.</text>
</comment>
<comment type="subcellular location">
    <subcellularLocation>
        <location evidence="1">Cytoplasm</location>
    </subcellularLocation>
</comment>
<comment type="similarity">
    <text evidence="1">Belongs to the PanB family.</text>
</comment>
<proteinExistence type="inferred from homology"/>